<reference key="1">
    <citation type="journal article" date="1999" name="Nature">
        <title>Sequence and analysis of chromosome 4 of the plant Arabidopsis thaliana.</title>
        <authorList>
            <person name="Mayer K.F.X."/>
            <person name="Schueller C."/>
            <person name="Wambutt R."/>
            <person name="Murphy G."/>
            <person name="Volckaert G."/>
            <person name="Pohl T."/>
            <person name="Duesterhoeft A."/>
            <person name="Stiekema W."/>
            <person name="Entian K.-D."/>
            <person name="Terryn N."/>
            <person name="Harris B."/>
            <person name="Ansorge W."/>
            <person name="Brandt P."/>
            <person name="Grivell L.A."/>
            <person name="Rieger M."/>
            <person name="Weichselgartner M."/>
            <person name="de Simone V."/>
            <person name="Obermaier B."/>
            <person name="Mache R."/>
            <person name="Mueller M."/>
            <person name="Kreis M."/>
            <person name="Delseny M."/>
            <person name="Puigdomenech P."/>
            <person name="Watson M."/>
            <person name="Schmidtheini T."/>
            <person name="Reichert B."/>
            <person name="Portetelle D."/>
            <person name="Perez-Alonso M."/>
            <person name="Boutry M."/>
            <person name="Bancroft I."/>
            <person name="Vos P."/>
            <person name="Hoheisel J."/>
            <person name="Zimmermann W."/>
            <person name="Wedler H."/>
            <person name="Ridley P."/>
            <person name="Langham S.-A."/>
            <person name="McCullagh B."/>
            <person name="Bilham L."/>
            <person name="Robben J."/>
            <person name="van der Schueren J."/>
            <person name="Grymonprez B."/>
            <person name="Chuang Y.-J."/>
            <person name="Vandenbussche F."/>
            <person name="Braeken M."/>
            <person name="Weltjens I."/>
            <person name="Voet M."/>
            <person name="Bastiaens I."/>
            <person name="Aert R."/>
            <person name="Defoor E."/>
            <person name="Weitzenegger T."/>
            <person name="Bothe G."/>
            <person name="Ramsperger U."/>
            <person name="Hilbert H."/>
            <person name="Braun M."/>
            <person name="Holzer E."/>
            <person name="Brandt A."/>
            <person name="Peters S."/>
            <person name="van Staveren M."/>
            <person name="Dirkse W."/>
            <person name="Mooijman P."/>
            <person name="Klein Lankhorst R."/>
            <person name="Rose M."/>
            <person name="Hauf J."/>
            <person name="Koetter P."/>
            <person name="Berneiser S."/>
            <person name="Hempel S."/>
            <person name="Feldpausch M."/>
            <person name="Lamberth S."/>
            <person name="Van den Daele H."/>
            <person name="De Keyser A."/>
            <person name="Buysshaert C."/>
            <person name="Gielen J."/>
            <person name="Villarroel R."/>
            <person name="De Clercq R."/>
            <person name="van Montagu M."/>
            <person name="Rogers J."/>
            <person name="Cronin A."/>
            <person name="Quail M.A."/>
            <person name="Bray-Allen S."/>
            <person name="Clark L."/>
            <person name="Doggett J."/>
            <person name="Hall S."/>
            <person name="Kay M."/>
            <person name="Lennard N."/>
            <person name="McLay K."/>
            <person name="Mayes R."/>
            <person name="Pettett A."/>
            <person name="Rajandream M.A."/>
            <person name="Lyne M."/>
            <person name="Benes V."/>
            <person name="Rechmann S."/>
            <person name="Borkova D."/>
            <person name="Bloecker H."/>
            <person name="Scharfe M."/>
            <person name="Grimm M."/>
            <person name="Loehnert T.-H."/>
            <person name="Dose S."/>
            <person name="de Haan M."/>
            <person name="Maarse A.C."/>
            <person name="Schaefer M."/>
            <person name="Mueller-Auer S."/>
            <person name="Gabel C."/>
            <person name="Fuchs M."/>
            <person name="Fartmann B."/>
            <person name="Granderath K."/>
            <person name="Dauner D."/>
            <person name="Herzl A."/>
            <person name="Neumann S."/>
            <person name="Argiriou A."/>
            <person name="Vitale D."/>
            <person name="Liguori R."/>
            <person name="Piravandi E."/>
            <person name="Massenet O."/>
            <person name="Quigley F."/>
            <person name="Clabauld G."/>
            <person name="Muendlein A."/>
            <person name="Felber R."/>
            <person name="Schnabl S."/>
            <person name="Hiller R."/>
            <person name="Schmidt W."/>
            <person name="Lecharny A."/>
            <person name="Aubourg S."/>
            <person name="Chefdor F."/>
            <person name="Cooke R."/>
            <person name="Berger C."/>
            <person name="Monfort A."/>
            <person name="Casacuberta E."/>
            <person name="Gibbons T."/>
            <person name="Weber N."/>
            <person name="Vandenbol M."/>
            <person name="Bargues M."/>
            <person name="Terol J."/>
            <person name="Torres A."/>
            <person name="Perez-Perez A."/>
            <person name="Purnelle B."/>
            <person name="Bent E."/>
            <person name="Johnson S."/>
            <person name="Tacon D."/>
            <person name="Jesse T."/>
            <person name="Heijnen L."/>
            <person name="Schwarz S."/>
            <person name="Scholler P."/>
            <person name="Heber S."/>
            <person name="Francs P."/>
            <person name="Bielke C."/>
            <person name="Frishman D."/>
            <person name="Haase D."/>
            <person name="Lemcke K."/>
            <person name="Mewes H.-W."/>
            <person name="Stocker S."/>
            <person name="Zaccaria P."/>
            <person name="Bevan M."/>
            <person name="Wilson R.K."/>
            <person name="de la Bastide M."/>
            <person name="Habermann K."/>
            <person name="Parnell L."/>
            <person name="Dedhia N."/>
            <person name="Gnoj L."/>
            <person name="Schutz K."/>
            <person name="Huang E."/>
            <person name="Spiegel L."/>
            <person name="Sekhon M."/>
            <person name="Murray J."/>
            <person name="Sheet P."/>
            <person name="Cordes M."/>
            <person name="Abu-Threideh J."/>
            <person name="Stoneking T."/>
            <person name="Kalicki J."/>
            <person name="Graves T."/>
            <person name="Harmon G."/>
            <person name="Edwards J."/>
            <person name="Latreille P."/>
            <person name="Courtney L."/>
            <person name="Cloud J."/>
            <person name="Abbott A."/>
            <person name="Scott K."/>
            <person name="Johnson D."/>
            <person name="Minx P."/>
            <person name="Bentley D."/>
            <person name="Fulton B."/>
            <person name="Miller N."/>
            <person name="Greco T."/>
            <person name="Kemp K."/>
            <person name="Kramer J."/>
            <person name="Fulton L."/>
            <person name="Mardis E."/>
            <person name="Dante M."/>
            <person name="Pepin K."/>
            <person name="Hillier L.W."/>
            <person name="Nelson J."/>
            <person name="Spieth J."/>
            <person name="Ryan E."/>
            <person name="Andrews S."/>
            <person name="Geisel C."/>
            <person name="Layman D."/>
            <person name="Du H."/>
            <person name="Ali J."/>
            <person name="Berghoff A."/>
            <person name="Jones K."/>
            <person name="Drone K."/>
            <person name="Cotton M."/>
            <person name="Joshu C."/>
            <person name="Antonoiu B."/>
            <person name="Zidanic M."/>
            <person name="Strong C."/>
            <person name="Sun H."/>
            <person name="Lamar B."/>
            <person name="Yordan C."/>
            <person name="Ma P."/>
            <person name="Zhong J."/>
            <person name="Preston R."/>
            <person name="Vil D."/>
            <person name="Shekher M."/>
            <person name="Matero A."/>
            <person name="Shah R."/>
            <person name="Swaby I.K."/>
            <person name="O'Shaughnessy A."/>
            <person name="Rodriguez M."/>
            <person name="Hoffman J."/>
            <person name="Till S."/>
            <person name="Granat S."/>
            <person name="Shohdy N."/>
            <person name="Hasegawa A."/>
            <person name="Hameed A."/>
            <person name="Lodhi M."/>
            <person name="Johnson A."/>
            <person name="Chen E."/>
            <person name="Marra M.A."/>
            <person name="Martienssen R."/>
            <person name="McCombie W.R."/>
        </authorList>
    </citation>
    <scope>NUCLEOTIDE SEQUENCE [LARGE SCALE GENOMIC DNA]</scope>
    <source>
        <strain>cv. Columbia</strain>
    </source>
</reference>
<reference key="2">
    <citation type="journal article" date="2017" name="Plant J.">
        <title>Araport11: a complete reannotation of the Arabidopsis thaliana reference genome.</title>
        <authorList>
            <person name="Cheng C.Y."/>
            <person name="Krishnakumar V."/>
            <person name="Chan A.P."/>
            <person name="Thibaud-Nissen F."/>
            <person name="Schobel S."/>
            <person name="Town C.D."/>
        </authorList>
    </citation>
    <scope>GENOME REANNOTATION</scope>
    <source>
        <strain>cv. Columbia</strain>
    </source>
</reference>
<reference key="3">
    <citation type="journal article" date="2001" name="Plant Physiol.">
        <title>A superfamily of proteins with novel cysteine-rich repeats.</title>
        <authorList>
            <person name="Chen Z."/>
        </authorList>
    </citation>
    <scope>GENE FAMILY ORGANIZATION</scope>
    <scope>NOMENCLATURE</scope>
</reference>
<dbReference type="EMBL" id="AL080253">
    <property type="protein sequence ID" value="CAB45820.1"/>
    <property type="status" value="ALT_SEQ"/>
    <property type="molecule type" value="Genomic_DNA"/>
</dbReference>
<dbReference type="EMBL" id="AL161553">
    <property type="protein sequence ID" value="CAB79054.1"/>
    <property type="status" value="ALT_SEQ"/>
    <property type="molecule type" value="Genomic_DNA"/>
</dbReference>
<dbReference type="EMBL" id="CP002687">
    <property type="protein sequence ID" value="AEE84340.2"/>
    <property type="status" value="ALT_SEQ"/>
    <property type="molecule type" value="Genomic_DNA"/>
</dbReference>
<dbReference type="PIR" id="T10595">
    <property type="entry name" value="T10595"/>
</dbReference>
<dbReference type="RefSeq" id="NP_001320011.1">
    <property type="nucleotide sequence ID" value="NM_001341442.1"/>
</dbReference>
<dbReference type="RefSeq" id="NP_001320012.1">
    <property type="nucleotide sequence ID" value="NM_001341444.1"/>
</dbReference>
<dbReference type="RefSeq" id="NP_001320013.1">
    <property type="nucleotide sequence ID" value="NM_001341449.1"/>
</dbReference>
<dbReference type="RefSeq" id="NP_001328923.1">
    <property type="nucleotide sequence ID" value="NM_001341450.1"/>
</dbReference>
<dbReference type="RefSeq" id="NP_567605.3">
    <property type="nucleotide sequence ID" value="NM_118174.3"/>
</dbReference>
<dbReference type="RefSeq" id="NP_567606.3">
    <property type="nucleotide sequence ID" value="NM_118175.3"/>
</dbReference>
<dbReference type="RefSeq" id="NP_567607.3">
    <property type="nucleotide sequence ID" value="NM_118176.3"/>
</dbReference>
<dbReference type="RefSeq" id="NP_567608.3">
    <property type="nucleotide sequence ID" value="NM_118177.3"/>
</dbReference>
<dbReference type="RefSeq" id="NP_567609.3">
    <property type="nucleotide sequence ID" value="NM_118178.3"/>
</dbReference>
<dbReference type="RefSeq" id="NP_567610.3">
    <property type="nucleotide sequence ID" value="NM_118179.3"/>
</dbReference>
<dbReference type="RefSeq" id="NP_567611.3">
    <property type="nucleotide sequence ID" value="NM_118180.3"/>
</dbReference>
<dbReference type="RefSeq" id="NP_567612.3">
    <property type="nucleotide sequence ID" value="NM_118181.3"/>
</dbReference>
<dbReference type="RefSeq" id="NP_567614.3">
    <property type="nucleotide sequence ID" value="NM_118183.3"/>
</dbReference>
<dbReference type="SMR" id="P0CJ60"/>
<dbReference type="EnsemblPlants" id="AT4G20580.1">
    <property type="protein sequence ID" value="AT4G20580.1"/>
    <property type="gene ID" value="AT4G20580"/>
</dbReference>
<dbReference type="EnsemblPlants" id="AT4G20590.1">
    <property type="protein sequence ID" value="AT4G20590.1"/>
    <property type="gene ID" value="AT4G20590"/>
</dbReference>
<dbReference type="EnsemblPlants" id="AT4G20600.1">
    <property type="protein sequence ID" value="AT4G20600.1"/>
    <property type="gene ID" value="AT4G20600"/>
</dbReference>
<dbReference type="EnsemblPlants" id="AT4G20610.1">
    <property type="protein sequence ID" value="AT4G20610.1"/>
    <property type="gene ID" value="AT4G20610"/>
</dbReference>
<dbReference type="EnsemblPlants" id="AT4G20620.1">
    <property type="protein sequence ID" value="AT4G20620.1"/>
    <property type="gene ID" value="AT4G20620"/>
</dbReference>
<dbReference type="EnsemblPlants" id="AT4G20630.1">
    <property type="protein sequence ID" value="AT4G20630.1"/>
    <property type="gene ID" value="AT4G20630"/>
</dbReference>
<dbReference type="EnsemblPlants" id="AT4G20640.1">
    <property type="protein sequence ID" value="AT4G20640.1"/>
    <property type="gene ID" value="AT4G20640"/>
</dbReference>
<dbReference type="GeneID" id="827802"/>
<dbReference type="Gramene" id="AT4G20580.1">
    <property type="protein sequence ID" value="AT4G20580.1"/>
    <property type="gene ID" value="AT4G20580"/>
</dbReference>
<dbReference type="Gramene" id="AT4G20590.1">
    <property type="protein sequence ID" value="AT4G20590.1"/>
    <property type="gene ID" value="AT4G20590"/>
</dbReference>
<dbReference type="Gramene" id="AT4G20600.1">
    <property type="protein sequence ID" value="AT4G20600.1"/>
    <property type="gene ID" value="AT4G20600"/>
</dbReference>
<dbReference type="Gramene" id="AT4G20610.1">
    <property type="protein sequence ID" value="AT4G20610.1"/>
    <property type="gene ID" value="AT4G20610"/>
</dbReference>
<dbReference type="Gramene" id="AT4G20620.1">
    <property type="protein sequence ID" value="AT4G20620.1"/>
    <property type="gene ID" value="AT4G20620"/>
</dbReference>
<dbReference type="Gramene" id="AT4G20630.1">
    <property type="protein sequence ID" value="AT4G20630.1"/>
    <property type="gene ID" value="AT4G20630"/>
</dbReference>
<dbReference type="Gramene" id="AT4G20640.1">
    <property type="protein sequence ID" value="AT4G20640.1"/>
    <property type="gene ID" value="AT4G20640"/>
</dbReference>
<dbReference type="KEGG" id="ath:AT4G20530"/>
<dbReference type="KEGG" id="ath:AT4G20540"/>
<dbReference type="KEGG" id="ath:AT4G20550"/>
<dbReference type="KEGG" id="ath:AT4G20560"/>
<dbReference type="KEGG" id="ath:AT4G20570"/>
<dbReference type="KEGG" id="ath:AT4G20580"/>
<dbReference type="KEGG" id="ath:AT4G20590"/>
<dbReference type="KEGG" id="ath:AT4G20600"/>
<dbReference type="KEGG" id="ath:AT4G20610"/>
<dbReference type="KEGG" id="ath:AT4G20620"/>
<dbReference type="KEGG" id="ath:AT4G20630"/>
<dbReference type="KEGG" id="ath:AT4G20640"/>
<dbReference type="KEGG" id="ath:AT4G20645"/>
<dbReference type="Araport" id="AT4G20540"/>
<dbReference type="TAIR" id="AT4G20540"/>
<dbReference type="HOGENOM" id="CLU_000288_35_0_1"/>
<dbReference type="InParanoid" id="P0CJ60"/>
<dbReference type="OMA" id="FIQVWNI"/>
<dbReference type="PRO" id="PR:P0CJ60"/>
<dbReference type="Proteomes" id="UP000006548">
    <property type="component" value="Chromosome 4"/>
</dbReference>
<dbReference type="ExpressionAtlas" id="P0CJ60">
    <property type="expression patterns" value="baseline"/>
</dbReference>
<dbReference type="GO" id="GO:0005576">
    <property type="term" value="C:extracellular region"/>
    <property type="evidence" value="ECO:0007669"/>
    <property type="project" value="UniProtKB-SubCell"/>
</dbReference>
<dbReference type="CDD" id="cd23509">
    <property type="entry name" value="Gnk2-like"/>
    <property type="match status" value="2"/>
</dbReference>
<dbReference type="FunFam" id="3.30.430.20:FF:000002">
    <property type="entry name" value="Cysteine-rich receptor-like protein kinase 10"/>
    <property type="match status" value="1"/>
</dbReference>
<dbReference type="Gene3D" id="3.30.430.20">
    <property type="entry name" value="Gnk2 domain, C-X8-C-X2-C motif"/>
    <property type="match status" value="2"/>
</dbReference>
<dbReference type="InterPro" id="IPR050581">
    <property type="entry name" value="CRR_secretory_protein"/>
</dbReference>
<dbReference type="InterPro" id="IPR002902">
    <property type="entry name" value="GNK2"/>
</dbReference>
<dbReference type="InterPro" id="IPR038408">
    <property type="entry name" value="GNK2_sf"/>
</dbReference>
<dbReference type="PANTHER" id="PTHR32411:SF54">
    <property type="entry name" value="CYSTEINE-RICH REPEAT SECRETORY PROTEIN 29-RELATED"/>
    <property type="match status" value="1"/>
</dbReference>
<dbReference type="PANTHER" id="PTHR32411">
    <property type="entry name" value="CYSTEINE-RICH REPEAT SECRETORY PROTEIN 38-RELATED"/>
    <property type="match status" value="1"/>
</dbReference>
<dbReference type="Pfam" id="PF01657">
    <property type="entry name" value="Stress-antifung"/>
    <property type="match status" value="2"/>
</dbReference>
<dbReference type="PROSITE" id="PS51473">
    <property type="entry name" value="GNK2"/>
    <property type="match status" value="2"/>
</dbReference>
<name>CRR53_ARATH</name>
<feature type="signal peptide" evidence="1">
    <location>
        <begin position="1"/>
        <end position="26"/>
    </location>
</feature>
<feature type="chain" id="PRO_0000403949" description="Cysteine-rich repeat secretory protein 53">
    <location>
        <begin position="27"/>
        <end position="256"/>
    </location>
</feature>
<feature type="domain" description="Gnk2-homologous 1" evidence="2">
    <location>
        <begin position="33"/>
        <end position="136"/>
    </location>
</feature>
<feature type="domain" description="Gnk2-homologous 2" evidence="2">
    <location>
        <begin position="142"/>
        <end position="253"/>
    </location>
</feature>
<gene>
    <name type="primary">CRRSP53</name>
    <name type="ordered locus">At4g20540</name>
    <name type="ORF">F9F13.190</name>
</gene>
<sequence length="256" mass="29018">MSSVFGSVHILAMIAIQLLLTHSVSSLNLTNAYLHHKCSNTQGKYKQGSAFEKNLNLVLSTITSIGNFRDGFRYTEEGEDPNNVFVMFQCRGDSYWSKCPPCISTAVSGLRRRCPRNKGAIIWYDQCLLKISSVASFNKIDYENDFYLSNPNNMSDRGLFNKETSALLEKLAYKASDRNNLDGKQLVLYAAGEKRIGTKKVYAMVQCTKDLIFTKCFECLEGILRKFPQCCDGKRGGRVFGTSCNFRYELYPFLRN</sequence>
<accession>P0CJ60</accession>
<accession>F4JVK7</accession>
<accession>Q680R8</accession>
<accession>Q9S7J6</accession>
<accession>Q9SUM6</accession>
<comment type="subcellular location">
    <subcellularLocation>
        <location evidence="3">Secreted</location>
    </subcellularLocation>
</comment>
<comment type="similarity">
    <text evidence="3">Belongs to the cysteine-rich repeat secretory protein family.</text>
</comment>
<comment type="sequence caution" evidence="3">
    <conflict type="erroneous gene model prediction">
        <sequence resource="EMBL-CDS" id="AEE84340"/>
    </conflict>
</comment>
<comment type="sequence caution" evidence="3">
    <conflict type="erroneous gene model prediction">
        <sequence resource="EMBL-CDS" id="CAB45820"/>
    </conflict>
</comment>
<comment type="sequence caution" evidence="3">
    <conflict type="erroneous gene model prediction">
        <sequence resource="EMBL-CDS" id="CAB79054"/>
    </conflict>
</comment>
<organism>
    <name type="scientific">Arabidopsis thaliana</name>
    <name type="common">Mouse-ear cress</name>
    <dbReference type="NCBI Taxonomy" id="3702"/>
    <lineage>
        <taxon>Eukaryota</taxon>
        <taxon>Viridiplantae</taxon>
        <taxon>Streptophyta</taxon>
        <taxon>Embryophyta</taxon>
        <taxon>Tracheophyta</taxon>
        <taxon>Spermatophyta</taxon>
        <taxon>Magnoliopsida</taxon>
        <taxon>eudicotyledons</taxon>
        <taxon>Gunneridae</taxon>
        <taxon>Pentapetalae</taxon>
        <taxon>rosids</taxon>
        <taxon>malvids</taxon>
        <taxon>Brassicales</taxon>
        <taxon>Brassicaceae</taxon>
        <taxon>Camelineae</taxon>
        <taxon>Arabidopsis</taxon>
    </lineage>
</organism>
<keyword id="KW-1185">Reference proteome</keyword>
<keyword id="KW-0677">Repeat</keyword>
<keyword id="KW-0964">Secreted</keyword>
<keyword id="KW-0732">Signal</keyword>
<protein>
    <recommendedName>
        <fullName>Cysteine-rich repeat secretory protein 53</fullName>
    </recommendedName>
</protein>
<evidence type="ECO:0000255" key="1"/>
<evidence type="ECO:0000255" key="2">
    <source>
        <dbReference type="PROSITE-ProRule" id="PRU00806"/>
    </source>
</evidence>
<evidence type="ECO:0000305" key="3"/>
<proteinExistence type="inferred from homology"/>